<proteinExistence type="evidence at transcript level"/>
<protein>
    <recommendedName>
        <fullName>Profilin-2</fullName>
    </recommendedName>
    <alternativeName>
        <fullName>Profilin II</fullName>
    </alternativeName>
</protein>
<sequence>MAGWQSYVDNLMCDGCCQEAAIVGYCDAKYVWAATAGGVFQSITPIEIDMIVGKDREGFFTNGLTLGAKKCSVIRDSLYVDGDCTMDIRTKSQGGEPTYNVAVGRAGRVLVFVMGKEGVHGGGLNKKAYSMAKYLRDSGF</sequence>
<feature type="initiator methionine" description="Removed" evidence="2">
    <location>
        <position position="1"/>
    </location>
</feature>
<feature type="chain" id="PRO_0000273708" description="Profilin-2">
    <location>
        <begin position="2"/>
        <end position="140"/>
    </location>
</feature>
<feature type="modified residue" description="N-acetylalanine" evidence="2">
    <location>
        <position position="2"/>
    </location>
</feature>
<organism>
    <name type="scientific">Macaca fascicularis</name>
    <name type="common">Crab-eating macaque</name>
    <name type="synonym">Cynomolgus monkey</name>
    <dbReference type="NCBI Taxonomy" id="9541"/>
    <lineage>
        <taxon>Eukaryota</taxon>
        <taxon>Metazoa</taxon>
        <taxon>Chordata</taxon>
        <taxon>Craniata</taxon>
        <taxon>Vertebrata</taxon>
        <taxon>Euteleostomi</taxon>
        <taxon>Mammalia</taxon>
        <taxon>Eutheria</taxon>
        <taxon>Euarchontoglires</taxon>
        <taxon>Primates</taxon>
        <taxon>Haplorrhini</taxon>
        <taxon>Catarrhini</taxon>
        <taxon>Cercopithecidae</taxon>
        <taxon>Cercopithecinae</taxon>
        <taxon>Macaca</taxon>
    </lineage>
</organism>
<gene>
    <name type="primary">PFN2</name>
    <name type="ORF">QtrA-12415</name>
</gene>
<dbReference type="EMBL" id="AB169846">
    <property type="protein sequence ID" value="BAE01927.1"/>
    <property type="molecule type" value="mRNA"/>
</dbReference>
<dbReference type="RefSeq" id="NP_001270511.1">
    <property type="nucleotide sequence ID" value="NM_001283582.1"/>
</dbReference>
<dbReference type="RefSeq" id="XP_045241057.1">
    <property type="nucleotide sequence ID" value="XM_045385122.2"/>
</dbReference>
<dbReference type="BMRB" id="Q4R4P8"/>
<dbReference type="SMR" id="Q4R4P8"/>
<dbReference type="STRING" id="9541.ENSMFAP00000025149"/>
<dbReference type="GeneID" id="101925958"/>
<dbReference type="eggNOG" id="KOG1755">
    <property type="taxonomic scope" value="Eukaryota"/>
</dbReference>
<dbReference type="Proteomes" id="UP000233100">
    <property type="component" value="Unplaced"/>
</dbReference>
<dbReference type="GO" id="GO:0005737">
    <property type="term" value="C:cytoplasm"/>
    <property type="evidence" value="ECO:0007669"/>
    <property type="project" value="UniProtKB-KW"/>
</dbReference>
<dbReference type="GO" id="GO:0005856">
    <property type="term" value="C:cytoskeleton"/>
    <property type="evidence" value="ECO:0007669"/>
    <property type="project" value="UniProtKB-SubCell"/>
</dbReference>
<dbReference type="GO" id="GO:0003779">
    <property type="term" value="F:actin binding"/>
    <property type="evidence" value="ECO:0007669"/>
    <property type="project" value="UniProtKB-KW"/>
</dbReference>
<dbReference type="GO" id="GO:0030036">
    <property type="term" value="P:actin cytoskeleton organization"/>
    <property type="evidence" value="ECO:0007669"/>
    <property type="project" value="InterPro"/>
</dbReference>
<dbReference type="GO" id="GO:0032233">
    <property type="term" value="P:positive regulation of actin filament bundle assembly"/>
    <property type="evidence" value="ECO:0007669"/>
    <property type="project" value="TreeGrafter"/>
</dbReference>
<dbReference type="GO" id="GO:0030833">
    <property type="term" value="P:regulation of actin filament polymerization"/>
    <property type="evidence" value="ECO:0007669"/>
    <property type="project" value="TreeGrafter"/>
</dbReference>
<dbReference type="CDD" id="cd00148">
    <property type="entry name" value="PROF"/>
    <property type="match status" value="1"/>
</dbReference>
<dbReference type="FunFam" id="3.30.450.30:FF:000006">
    <property type="entry name" value="Profilin"/>
    <property type="match status" value="1"/>
</dbReference>
<dbReference type="Gene3D" id="3.30.450.30">
    <property type="entry name" value="Dynein light chain 2a, cytoplasmic"/>
    <property type="match status" value="1"/>
</dbReference>
<dbReference type="InterPro" id="IPR048278">
    <property type="entry name" value="PFN"/>
</dbReference>
<dbReference type="InterPro" id="IPR005455">
    <property type="entry name" value="PFN_euk"/>
</dbReference>
<dbReference type="InterPro" id="IPR036140">
    <property type="entry name" value="PFN_sf"/>
</dbReference>
<dbReference type="InterPro" id="IPR005454">
    <property type="entry name" value="Profilin1/2/3_vertebrate"/>
</dbReference>
<dbReference type="InterPro" id="IPR027310">
    <property type="entry name" value="Profilin_CS"/>
</dbReference>
<dbReference type="PANTHER" id="PTHR13936">
    <property type="entry name" value="PROFILIN"/>
    <property type="match status" value="1"/>
</dbReference>
<dbReference type="PANTHER" id="PTHR13936:SF15">
    <property type="entry name" value="PROFILIN-2"/>
    <property type="match status" value="1"/>
</dbReference>
<dbReference type="Pfam" id="PF00235">
    <property type="entry name" value="Profilin"/>
    <property type="match status" value="1"/>
</dbReference>
<dbReference type="PRINTS" id="PR00392">
    <property type="entry name" value="PROFILIN"/>
</dbReference>
<dbReference type="PRINTS" id="PR01639">
    <property type="entry name" value="PROFILINMAML"/>
</dbReference>
<dbReference type="SMART" id="SM00392">
    <property type="entry name" value="PROF"/>
    <property type="match status" value="1"/>
</dbReference>
<dbReference type="SUPFAM" id="SSF55770">
    <property type="entry name" value="Profilin (actin-binding protein)"/>
    <property type="match status" value="1"/>
</dbReference>
<dbReference type="PROSITE" id="PS00414">
    <property type="entry name" value="PROFILIN"/>
    <property type="match status" value="1"/>
</dbReference>
<comment type="function">
    <text evidence="1">Binds to actin and affects the structure of the cytoskeleton. At high concentrations, profilin prevents the polymerization of actin, whereas it enhances it at low concentrations. By binding to PIP2, it inhibits the formation of IP3 and DG (By similarity).</text>
</comment>
<comment type="subunit">
    <text evidence="2 3">Occurs in many kinds of cells as a complex with monomeric actin in a 1:1 ratio (By similarity). Interacts with PFN2 (By similarity). Interacts with ACTMAP (via N-terminus); the interaction may facilitate efficient cleavage of the acetylated N-terminus of immature actin by ACTMAP (By similarity).</text>
</comment>
<comment type="subcellular location">
    <subcellularLocation>
        <location evidence="1">Cytoplasm</location>
        <location evidence="1">Cytoskeleton</location>
    </subcellularLocation>
</comment>
<comment type="similarity">
    <text evidence="4">Belongs to the profilin family.</text>
</comment>
<accession>Q4R4P8</accession>
<reference key="1">
    <citation type="submission" date="2005-06" db="EMBL/GenBank/DDBJ databases">
        <title>DNA sequences of macaque genes expressed in brain or testis and its evolutionary implications.</title>
        <authorList>
            <consortium name="International consortium for macaque cDNA sequencing and analysis"/>
        </authorList>
    </citation>
    <scope>NUCLEOTIDE SEQUENCE [LARGE SCALE MRNA]</scope>
    <source>
        <tissue>Temporal cortex</tissue>
    </source>
</reference>
<name>PROF2_MACFA</name>
<keyword id="KW-0007">Acetylation</keyword>
<keyword id="KW-0009">Actin-binding</keyword>
<keyword id="KW-0963">Cytoplasm</keyword>
<keyword id="KW-0206">Cytoskeleton</keyword>
<keyword id="KW-1185">Reference proteome</keyword>
<evidence type="ECO:0000250" key="1"/>
<evidence type="ECO:0000250" key="2">
    <source>
        <dbReference type="UniProtKB" id="P35080"/>
    </source>
</evidence>
<evidence type="ECO:0000250" key="3">
    <source>
        <dbReference type="UniProtKB" id="Q9JJV2"/>
    </source>
</evidence>
<evidence type="ECO:0000305" key="4"/>